<gene>
    <name type="ordered locus">MJ1284</name>
</gene>
<dbReference type="EMBL" id="L77117">
    <property type="protein sequence ID" value="AAB99293.1"/>
    <property type="molecule type" value="Genomic_DNA"/>
</dbReference>
<dbReference type="PIR" id="C64460">
    <property type="entry name" value="C64460"/>
</dbReference>
<dbReference type="RefSeq" id="WP_010870799.1">
    <property type="nucleotide sequence ID" value="NC_000909.1"/>
</dbReference>
<dbReference type="STRING" id="243232.MJ_1284"/>
<dbReference type="PaxDb" id="243232-MJ_1284"/>
<dbReference type="EnsemblBacteria" id="AAB99293">
    <property type="protein sequence ID" value="AAB99293"/>
    <property type="gene ID" value="MJ_1284"/>
</dbReference>
<dbReference type="GeneID" id="1452184"/>
<dbReference type="KEGG" id="mja:MJ_1284"/>
<dbReference type="eggNOG" id="arCOG08269">
    <property type="taxonomic scope" value="Archaea"/>
</dbReference>
<dbReference type="HOGENOM" id="CLU_2056048_0_0_2"/>
<dbReference type="InParanoid" id="Q58680"/>
<dbReference type="OrthoDB" id="64245at2157"/>
<dbReference type="Proteomes" id="UP000000805">
    <property type="component" value="Chromosome"/>
</dbReference>
<sequence>MILNNKGFIRILEATIAGIMVILVFSYLVMSQNFDYNLSLEFIGYNALYSAHIEEGDFENISSLYKKIELPSNVGYGFEIYKNGNLIYSDAKNGVVVERNFIFENNTSVNFYKLRLILWWR</sequence>
<organism>
    <name type="scientific">Methanocaldococcus jannaschii (strain ATCC 43067 / DSM 2661 / JAL-1 / JCM 10045 / NBRC 100440)</name>
    <name type="common">Methanococcus jannaschii</name>
    <dbReference type="NCBI Taxonomy" id="243232"/>
    <lineage>
        <taxon>Archaea</taxon>
        <taxon>Methanobacteriati</taxon>
        <taxon>Methanobacteriota</taxon>
        <taxon>Methanomada group</taxon>
        <taxon>Methanococci</taxon>
        <taxon>Methanococcales</taxon>
        <taxon>Methanocaldococcaceae</taxon>
        <taxon>Methanocaldococcus</taxon>
    </lineage>
</organism>
<proteinExistence type="inferred from homology"/>
<keyword id="KW-1185">Reference proteome</keyword>
<keyword id="KW-0732">Signal</keyword>
<protein>
    <recommendedName>
        <fullName>Uncharacterized protein MJ1284</fullName>
    </recommendedName>
</protein>
<reference key="1">
    <citation type="journal article" date="1996" name="Science">
        <title>Complete genome sequence of the methanogenic archaeon, Methanococcus jannaschii.</title>
        <authorList>
            <person name="Bult C.J."/>
            <person name="White O."/>
            <person name="Olsen G.J."/>
            <person name="Zhou L."/>
            <person name="Fleischmann R.D."/>
            <person name="Sutton G.G."/>
            <person name="Blake J.A."/>
            <person name="FitzGerald L.M."/>
            <person name="Clayton R.A."/>
            <person name="Gocayne J.D."/>
            <person name="Kerlavage A.R."/>
            <person name="Dougherty B.A."/>
            <person name="Tomb J.-F."/>
            <person name="Adams M.D."/>
            <person name="Reich C.I."/>
            <person name="Overbeek R."/>
            <person name="Kirkness E.F."/>
            <person name="Weinstock K.G."/>
            <person name="Merrick J.M."/>
            <person name="Glodek A."/>
            <person name="Scott J.L."/>
            <person name="Geoghagen N.S.M."/>
            <person name="Weidman J.F."/>
            <person name="Fuhrmann J.L."/>
            <person name="Nguyen D."/>
            <person name="Utterback T.R."/>
            <person name="Kelley J.M."/>
            <person name="Peterson J.D."/>
            <person name="Sadow P.W."/>
            <person name="Hanna M.C."/>
            <person name="Cotton M.D."/>
            <person name="Roberts K.M."/>
            <person name="Hurst M.A."/>
            <person name="Kaine B.P."/>
            <person name="Borodovsky M."/>
            <person name="Klenk H.-P."/>
            <person name="Fraser C.M."/>
            <person name="Smith H.O."/>
            <person name="Woese C.R."/>
            <person name="Venter J.C."/>
        </authorList>
    </citation>
    <scope>NUCLEOTIDE SEQUENCE [LARGE SCALE GENOMIC DNA]</scope>
    <source>
        <strain>ATCC 43067 / DSM 2661 / JAL-1 / JCM 10045 / NBRC 100440</strain>
    </source>
</reference>
<comment type="similarity">
    <text evidence="2">To B.burgdorferi BB0465 N-terminal region.</text>
</comment>
<name>Y1284_METJA</name>
<accession>Q58680</accession>
<feature type="signal peptide" evidence="1">
    <location>
        <begin position="1"/>
        <end position="31"/>
    </location>
</feature>
<feature type="chain" id="PRO_0000014011" description="Uncharacterized protein MJ1284">
    <location>
        <begin position="32"/>
        <end position="121"/>
    </location>
</feature>
<evidence type="ECO:0000255" key="1"/>
<evidence type="ECO:0000305" key="2"/>